<gene>
    <name evidence="1" type="primary">proB</name>
    <name type="ordered locus">LIC_12772</name>
</gene>
<feature type="chain" id="PRO_0000109685" description="Glutamate 5-kinase">
    <location>
        <begin position="1"/>
        <end position="290"/>
    </location>
</feature>
<feature type="binding site" evidence="1">
    <location>
        <position position="21"/>
    </location>
    <ligand>
        <name>ATP</name>
        <dbReference type="ChEBI" id="CHEBI:30616"/>
    </ligand>
</feature>
<feature type="binding site" evidence="1">
    <location>
        <position position="60"/>
    </location>
    <ligand>
        <name>substrate</name>
    </ligand>
</feature>
<feature type="binding site" evidence="1">
    <location>
        <position position="151"/>
    </location>
    <ligand>
        <name>substrate</name>
    </ligand>
</feature>
<feature type="binding site" evidence="1">
    <location>
        <position position="163"/>
    </location>
    <ligand>
        <name>substrate</name>
    </ligand>
</feature>
<feature type="binding site" evidence="1">
    <location>
        <begin position="217"/>
        <end position="223"/>
    </location>
    <ligand>
        <name>ATP</name>
        <dbReference type="ChEBI" id="CHEBI:30616"/>
    </ligand>
</feature>
<proteinExistence type="inferred from homology"/>
<reference key="1">
    <citation type="journal article" date="2004" name="J. Bacteriol.">
        <title>Comparative genomics of two Leptospira interrogans serovars reveals novel insights into physiology and pathogenesis.</title>
        <authorList>
            <person name="Nascimento A.L.T.O."/>
            <person name="Ko A.I."/>
            <person name="Martins E.A.L."/>
            <person name="Monteiro-Vitorello C.B."/>
            <person name="Ho P.L."/>
            <person name="Haake D.A."/>
            <person name="Verjovski-Almeida S."/>
            <person name="Hartskeerl R.A."/>
            <person name="Marques M.V."/>
            <person name="Oliveira M.C."/>
            <person name="Menck C.F.M."/>
            <person name="Leite L.C.C."/>
            <person name="Carrer H."/>
            <person name="Coutinho L.L."/>
            <person name="Degrave W.M."/>
            <person name="Dellagostin O.A."/>
            <person name="El-Dorry H."/>
            <person name="Ferro E.S."/>
            <person name="Ferro M.I.T."/>
            <person name="Furlan L.R."/>
            <person name="Gamberini M."/>
            <person name="Giglioti E.A."/>
            <person name="Goes-Neto A."/>
            <person name="Goldman G.H."/>
            <person name="Goldman M.H.S."/>
            <person name="Harakava R."/>
            <person name="Jeronimo S.M.B."/>
            <person name="Junqueira-de-Azevedo I.L.M."/>
            <person name="Kimura E.T."/>
            <person name="Kuramae E.E."/>
            <person name="Lemos E.G.M."/>
            <person name="Lemos M.V.F."/>
            <person name="Marino C.L."/>
            <person name="Nunes L.R."/>
            <person name="de Oliveira R.C."/>
            <person name="Pereira G.G."/>
            <person name="Reis M.S."/>
            <person name="Schriefer A."/>
            <person name="Siqueira W.J."/>
            <person name="Sommer P."/>
            <person name="Tsai S.M."/>
            <person name="Simpson A.J.G."/>
            <person name="Ferro J.A."/>
            <person name="Camargo L.E.A."/>
            <person name="Kitajima J.P."/>
            <person name="Setubal J.C."/>
            <person name="Van Sluys M.A."/>
        </authorList>
    </citation>
    <scope>NUCLEOTIDE SEQUENCE [LARGE SCALE GENOMIC DNA]</scope>
    <source>
        <strain>Fiocruz L1-130</strain>
    </source>
</reference>
<accession>Q72NQ8</accession>
<name>PROB_LEPIC</name>
<dbReference type="EC" id="2.7.2.11" evidence="1"/>
<dbReference type="EMBL" id="AE016823">
    <property type="protein sequence ID" value="AAS71328.1"/>
    <property type="molecule type" value="Genomic_DNA"/>
</dbReference>
<dbReference type="RefSeq" id="WP_000801906.1">
    <property type="nucleotide sequence ID" value="NC_005823.1"/>
</dbReference>
<dbReference type="SMR" id="Q72NQ8"/>
<dbReference type="GeneID" id="61142650"/>
<dbReference type="KEGG" id="lic:LIC_12772"/>
<dbReference type="HOGENOM" id="CLU_025400_0_2_12"/>
<dbReference type="UniPathway" id="UPA00098">
    <property type="reaction ID" value="UER00359"/>
</dbReference>
<dbReference type="Proteomes" id="UP000007037">
    <property type="component" value="Chromosome I"/>
</dbReference>
<dbReference type="GO" id="GO:0005829">
    <property type="term" value="C:cytosol"/>
    <property type="evidence" value="ECO:0007669"/>
    <property type="project" value="TreeGrafter"/>
</dbReference>
<dbReference type="GO" id="GO:0005524">
    <property type="term" value="F:ATP binding"/>
    <property type="evidence" value="ECO:0007669"/>
    <property type="project" value="UniProtKB-KW"/>
</dbReference>
<dbReference type="GO" id="GO:0004349">
    <property type="term" value="F:glutamate 5-kinase activity"/>
    <property type="evidence" value="ECO:0007669"/>
    <property type="project" value="UniProtKB-UniRule"/>
</dbReference>
<dbReference type="GO" id="GO:0055129">
    <property type="term" value="P:L-proline biosynthetic process"/>
    <property type="evidence" value="ECO:0007669"/>
    <property type="project" value="UniProtKB-UniRule"/>
</dbReference>
<dbReference type="CDD" id="cd04242">
    <property type="entry name" value="AAK_G5K_ProB"/>
    <property type="match status" value="1"/>
</dbReference>
<dbReference type="FunFam" id="3.40.1160.10:FF:000006">
    <property type="entry name" value="Glutamate 5-kinase"/>
    <property type="match status" value="1"/>
</dbReference>
<dbReference type="Gene3D" id="3.40.1160.10">
    <property type="entry name" value="Acetylglutamate kinase-like"/>
    <property type="match status" value="1"/>
</dbReference>
<dbReference type="HAMAP" id="MF_00456">
    <property type="entry name" value="ProB"/>
    <property type="match status" value="1"/>
</dbReference>
<dbReference type="InterPro" id="IPR036393">
    <property type="entry name" value="AceGlu_kinase-like_sf"/>
</dbReference>
<dbReference type="InterPro" id="IPR001048">
    <property type="entry name" value="Asp/Glu/Uridylate_kinase"/>
</dbReference>
<dbReference type="InterPro" id="IPR041739">
    <property type="entry name" value="G5K_ProB"/>
</dbReference>
<dbReference type="InterPro" id="IPR001057">
    <property type="entry name" value="Glu/AcGlu_kinase"/>
</dbReference>
<dbReference type="InterPro" id="IPR011529">
    <property type="entry name" value="Glu_5kinase"/>
</dbReference>
<dbReference type="InterPro" id="IPR005715">
    <property type="entry name" value="Glu_5kinase/COase_Synthase"/>
</dbReference>
<dbReference type="InterPro" id="IPR019797">
    <property type="entry name" value="Glutamate_5-kinase_CS"/>
</dbReference>
<dbReference type="NCBIfam" id="TIGR01027">
    <property type="entry name" value="proB"/>
    <property type="match status" value="1"/>
</dbReference>
<dbReference type="PANTHER" id="PTHR43654">
    <property type="entry name" value="GLUTAMATE 5-KINASE"/>
    <property type="match status" value="1"/>
</dbReference>
<dbReference type="PANTHER" id="PTHR43654:SF1">
    <property type="entry name" value="ISOPENTENYL PHOSPHATE KINASE"/>
    <property type="match status" value="1"/>
</dbReference>
<dbReference type="Pfam" id="PF00696">
    <property type="entry name" value="AA_kinase"/>
    <property type="match status" value="1"/>
</dbReference>
<dbReference type="PIRSF" id="PIRSF000729">
    <property type="entry name" value="GK"/>
    <property type="match status" value="1"/>
</dbReference>
<dbReference type="PRINTS" id="PR00474">
    <property type="entry name" value="GLU5KINASE"/>
</dbReference>
<dbReference type="SUPFAM" id="SSF53633">
    <property type="entry name" value="Carbamate kinase-like"/>
    <property type="match status" value="1"/>
</dbReference>
<dbReference type="PROSITE" id="PS00902">
    <property type="entry name" value="GLUTAMATE_5_KINASE"/>
    <property type="match status" value="1"/>
</dbReference>
<evidence type="ECO:0000255" key="1">
    <source>
        <dbReference type="HAMAP-Rule" id="MF_00456"/>
    </source>
</evidence>
<sequence>MKPERNSLSEKIRNAEKIVIKVGSARLSGLPSEVNDFLFQLVSDIRHLRDLGKKVILVSSGAIARGRLLLSELPSTISSGDSLAEKQALAAMGQNRLVNLYDSFFSKVNLSIAQILFGVLDLESKEGYKNLKNTFTQLVEWGILPVVNENDSVATEEVKFGDNDMLSALVSLIVEADLLIILTGVDGFLKEEKVVPFLEKISKEDLGLAGGPSGPGTGGMFTKLKSAGLLSEAGIPTAILNGKKMHVIREFLEKNSIGTLVAPSGNRVFSEEDVKEIIRKNRNGNGGNSL</sequence>
<protein>
    <recommendedName>
        <fullName evidence="1">Glutamate 5-kinase</fullName>
        <ecNumber evidence="1">2.7.2.11</ecNumber>
    </recommendedName>
    <alternativeName>
        <fullName evidence="1">Gamma-glutamyl kinase</fullName>
        <shortName evidence="1">GK</shortName>
    </alternativeName>
</protein>
<organism>
    <name type="scientific">Leptospira interrogans serogroup Icterohaemorrhagiae serovar copenhageni (strain Fiocruz L1-130)</name>
    <dbReference type="NCBI Taxonomy" id="267671"/>
    <lineage>
        <taxon>Bacteria</taxon>
        <taxon>Pseudomonadati</taxon>
        <taxon>Spirochaetota</taxon>
        <taxon>Spirochaetia</taxon>
        <taxon>Leptospirales</taxon>
        <taxon>Leptospiraceae</taxon>
        <taxon>Leptospira</taxon>
    </lineage>
</organism>
<comment type="function">
    <text evidence="1">Catalyzes the transfer of a phosphate group to glutamate to form L-glutamate 5-phosphate.</text>
</comment>
<comment type="catalytic activity">
    <reaction evidence="1">
        <text>L-glutamate + ATP = L-glutamyl 5-phosphate + ADP</text>
        <dbReference type="Rhea" id="RHEA:14877"/>
        <dbReference type="ChEBI" id="CHEBI:29985"/>
        <dbReference type="ChEBI" id="CHEBI:30616"/>
        <dbReference type="ChEBI" id="CHEBI:58274"/>
        <dbReference type="ChEBI" id="CHEBI:456216"/>
        <dbReference type="EC" id="2.7.2.11"/>
    </reaction>
</comment>
<comment type="pathway">
    <text evidence="1">Amino-acid biosynthesis; L-proline biosynthesis; L-glutamate 5-semialdehyde from L-glutamate: step 1/2.</text>
</comment>
<comment type="subcellular location">
    <subcellularLocation>
        <location evidence="1">Cytoplasm</location>
    </subcellularLocation>
</comment>
<comment type="similarity">
    <text evidence="1">Belongs to the glutamate 5-kinase family.</text>
</comment>
<keyword id="KW-0028">Amino-acid biosynthesis</keyword>
<keyword id="KW-0067">ATP-binding</keyword>
<keyword id="KW-0963">Cytoplasm</keyword>
<keyword id="KW-0418">Kinase</keyword>
<keyword id="KW-0547">Nucleotide-binding</keyword>
<keyword id="KW-0641">Proline biosynthesis</keyword>
<keyword id="KW-0808">Transferase</keyword>